<comment type="function">
    <text evidence="1">Transfers the 4'-phosphopantetheine moiety from coenzyme A to a Ser of acyl-carrier-protein.</text>
</comment>
<comment type="catalytic activity">
    <reaction evidence="1">
        <text>apo-[ACP] + CoA = holo-[ACP] + adenosine 3',5'-bisphosphate + H(+)</text>
        <dbReference type="Rhea" id="RHEA:12068"/>
        <dbReference type="Rhea" id="RHEA-COMP:9685"/>
        <dbReference type="Rhea" id="RHEA-COMP:9690"/>
        <dbReference type="ChEBI" id="CHEBI:15378"/>
        <dbReference type="ChEBI" id="CHEBI:29999"/>
        <dbReference type="ChEBI" id="CHEBI:57287"/>
        <dbReference type="ChEBI" id="CHEBI:58343"/>
        <dbReference type="ChEBI" id="CHEBI:64479"/>
        <dbReference type="EC" id="2.7.8.7"/>
    </reaction>
</comment>
<comment type="cofactor">
    <cofactor evidence="1">
        <name>Mg(2+)</name>
        <dbReference type="ChEBI" id="CHEBI:18420"/>
    </cofactor>
</comment>
<comment type="subcellular location">
    <subcellularLocation>
        <location evidence="1">Cytoplasm</location>
    </subcellularLocation>
</comment>
<comment type="similarity">
    <text evidence="1">Belongs to the P-Pant transferase superfamily. AcpS family.</text>
</comment>
<dbReference type="EC" id="2.7.8.7" evidence="1"/>
<dbReference type="EMBL" id="CP001196">
    <property type="protein sequence ID" value="ACI92965.1"/>
    <property type="molecule type" value="Genomic_DNA"/>
</dbReference>
<dbReference type="EMBL" id="CP002826">
    <property type="protein sequence ID" value="AEI06880.1"/>
    <property type="molecule type" value="Genomic_DNA"/>
</dbReference>
<dbReference type="RefSeq" id="WP_012562992.1">
    <property type="nucleotide sequence ID" value="NC_015684.1"/>
</dbReference>
<dbReference type="SMR" id="B6JGF9"/>
<dbReference type="STRING" id="504832.OCA5_c21770"/>
<dbReference type="KEGG" id="oca:OCAR_5840"/>
<dbReference type="KEGG" id="ocg:OCA5_c21770"/>
<dbReference type="PATRIC" id="fig|504832.7.peg.2299"/>
<dbReference type="eggNOG" id="COG0736">
    <property type="taxonomic scope" value="Bacteria"/>
</dbReference>
<dbReference type="HOGENOM" id="CLU_089696_0_2_5"/>
<dbReference type="OrthoDB" id="517356at2"/>
<dbReference type="Proteomes" id="UP000007730">
    <property type="component" value="Chromosome"/>
</dbReference>
<dbReference type="GO" id="GO:0005737">
    <property type="term" value="C:cytoplasm"/>
    <property type="evidence" value="ECO:0007669"/>
    <property type="project" value="UniProtKB-SubCell"/>
</dbReference>
<dbReference type="GO" id="GO:0008897">
    <property type="term" value="F:holo-[acyl-carrier-protein] synthase activity"/>
    <property type="evidence" value="ECO:0007669"/>
    <property type="project" value="UniProtKB-UniRule"/>
</dbReference>
<dbReference type="GO" id="GO:0000287">
    <property type="term" value="F:magnesium ion binding"/>
    <property type="evidence" value="ECO:0007669"/>
    <property type="project" value="UniProtKB-UniRule"/>
</dbReference>
<dbReference type="GO" id="GO:0006633">
    <property type="term" value="P:fatty acid biosynthetic process"/>
    <property type="evidence" value="ECO:0007669"/>
    <property type="project" value="UniProtKB-UniRule"/>
</dbReference>
<dbReference type="Gene3D" id="3.90.470.20">
    <property type="entry name" value="4'-phosphopantetheinyl transferase domain"/>
    <property type="match status" value="1"/>
</dbReference>
<dbReference type="HAMAP" id="MF_00101">
    <property type="entry name" value="AcpS"/>
    <property type="match status" value="1"/>
</dbReference>
<dbReference type="InterPro" id="IPR008278">
    <property type="entry name" value="4-PPantetheinyl_Trfase_dom"/>
</dbReference>
<dbReference type="InterPro" id="IPR037143">
    <property type="entry name" value="4-PPantetheinyl_Trfase_dom_sf"/>
</dbReference>
<dbReference type="InterPro" id="IPR002582">
    <property type="entry name" value="ACPS"/>
</dbReference>
<dbReference type="InterPro" id="IPR004568">
    <property type="entry name" value="Ppantetheine-prot_Trfase_dom"/>
</dbReference>
<dbReference type="NCBIfam" id="TIGR00516">
    <property type="entry name" value="acpS"/>
    <property type="match status" value="1"/>
</dbReference>
<dbReference type="NCBIfam" id="TIGR00556">
    <property type="entry name" value="pantethn_trn"/>
    <property type="match status" value="1"/>
</dbReference>
<dbReference type="Pfam" id="PF01648">
    <property type="entry name" value="ACPS"/>
    <property type="match status" value="1"/>
</dbReference>
<dbReference type="SUPFAM" id="SSF56214">
    <property type="entry name" value="4'-phosphopantetheinyl transferase"/>
    <property type="match status" value="1"/>
</dbReference>
<accession>B6JGF9</accession>
<accession>F8BXP3</accession>
<reference key="1">
    <citation type="journal article" date="2008" name="J. Bacteriol.">
        <title>Genome sequence of the chemolithoautotrophic bacterium Oligotropha carboxidovorans OM5T.</title>
        <authorList>
            <person name="Paul D."/>
            <person name="Bridges S."/>
            <person name="Burgess S.C."/>
            <person name="Dandass Y."/>
            <person name="Lawrence M.L."/>
        </authorList>
    </citation>
    <scope>NUCLEOTIDE SEQUENCE [LARGE SCALE GENOMIC DNA]</scope>
    <source>
        <strain>ATCC 49405 / DSM 1227 / KCTC 32145 / OM5</strain>
    </source>
</reference>
<reference key="2">
    <citation type="journal article" date="2011" name="J. Bacteriol.">
        <title>Complete genome sequences of the chemolithoautotrophic Oligotropha carboxidovorans strains OM4 and OM5.</title>
        <authorList>
            <person name="Volland S."/>
            <person name="Rachinger M."/>
            <person name="Strittmatter A."/>
            <person name="Daniel R."/>
            <person name="Gottschalk G."/>
            <person name="Meyer O."/>
        </authorList>
    </citation>
    <scope>NUCLEOTIDE SEQUENCE [LARGE SCALE GENOMIC DNA]</scope>
    <source>
        <strain>ATCC 49405 / DSM 1227 / KCTC 32145 / OM5</strain>
    </source>
</reference>
<name>ACPS_AFIC5</name>
<protein>
    <recommendedName>
        <fullName evidence="1">Holo-[acyl-carrier-protein] synthase</fullName>
        <shortName evidence="1">Holo-ACP synthase</shortName>
        <ecNumber evidence="1">2.7.8.7</ecNumber>
    </recommendedName>
    <alternativeName>
        <fullName evidence="1">4'-phosphopantetheinyl transferase AcpS</fullName>
    </alternativeName>
</protein>
<feature type="chain" id="PRO_1000093900" description="Holo-[acyl-carrier-protein] synthase">
    <location>
        <begin position="1"/>
        <end position="137"/>
    </location>
</feature>
<feature type="binding site" evidence="1">
    <location>
        <position position="8"/>
    </location>
    <ligand>
        <name>Mg(2+)</name>
        <dbReference type="ChEBI" id="CHEBI:18420"/>
    </ligand>
</feature>
<feature type="binding site" evidence="1">
    <location>
        <position position="61"/>
    </location>
    <ligand>
        <name>Mg(2+)</name>
        <dbReference type="ChEBI" id="CHEBI:18420"/>
    </ligand>
</feature>
<keyword id="KW-0963">Cytoplasm</keyword>
<keyword id="KW-0275">Fatty acid biosynthesis</keyword>
<keyword id="KW-0276">Fatty acid metabolism</keyword>
<keyword id="KW-0444">Lipid biosynthesis</keyword>
<keyword id="KW-0443">Lipid metabolism</keyword>
<keyword id="KW-0460">Magnesium</keyword>
<keyword id="KW-0479">Metal-binding</keyword>
<keyword id="KW-1185">Reference proteome</keyword>
<keyword id="KW-0808">Transferase</keyword>
<organism>
    <name type="scientific">Afipia carboxidovorans (strain ATCC 49405 / DSM 1227 / KCTC 32145 / OM5)</name>
    <name type="common">Oligotropha carboxidovorans</name>
    <dbReference type="NCBI Taxonomy" id="504832"/>
    <lineage>
        <taxon>Bacteria</taxon>
        <taxon>Pseudomonadati</taxon>
        <taxon>Pseudomonadota</taxon>
        <taxon>Alphaproteobacteria</taxon>
        <taxon>Hyphomicrobiales</taxon>
        <taxon>Nitrobacteraceae</taxon>
        <taxon>Afipia</taxon>
    </lineage>
</organism>
<sequence>MILGIGSDTIDIRRVQEVIERHGARFIDRIFTEAEQAKAERRAKAPRAWVATYAKRFAAKEACAKALGTGIRQGVWWRDMGVVNLPGGRPTMQLTGGALVRLESLLPPGHEARIDLTITDDWPTAQAFVIISALPRG</sequence>
<proteinExistence type="inferred from homology"/>
<evidence type="ECO:0000255" key="1">
    <source>
        <dbReference type="HAMAP-Rule" id="MF_00101"/>
    </source>
</evidence>
<gene>
    <name evidence="1" type="primary">acpS</name>
    <name type="ordered locus">OCAR_5840</name>
    <name type="ordered locus">OCA5_c21770</name>
</gene>